<comment type="catalytic activity">
    <reaction evidence="1">
        <text>D-erythro-1-(imidazol-4-yl)glycerol 3-phosphate = 3-(imidazol-4-yl)-2-oxopropyl phosphate + H2O</text>
        <dbReference type="Rhea" id="RHEA:11040"/>
        <dbReference type="ChEBI" id="CHEBI:15377"/>
        <dbReference type="ChEBI" id="CHEBI:57766"/>
        <dbReference type="ChEBI" id="CHEBI:58278"/>
        <dbReference type="EC" id="4.2.1.19"/>
    </reaction>
</comment>
<comment type="pathway">
    <text evidence="1">Amino-acid biosynthesis; L-histidine biosynthesis; L-histidine from 5-phospho-alpha-D-ribose 1-diphosphate: step 6/9.</text>
</comment>
<comment type="subcellular location">
    <subcellularLocation>
        <location evidence="1">Cytoplasm</location>
    </subcellularLocation>
</comment>
<comment type="similarity">
    <text evidence="1">Belongs to the imidazoleglycerol-phosphate dehydratase family.</text>
</comment>
<protein>
    <recommendedName>
        <fullName evidence="1">Imidazoleglycerol-phosphate dehydratase</fullName>
        <shortName evidence="1">IGPD</shortName>
        <ecNumber evidence="1">4.2.1.19</ecNumber>
    </recommendedName>
</protein>
<proteinExistence type="inferred from homology"/>
<organism>
    <name type="scientific">Burkholderia vietnamiensis (strain G4 / LMG 22486)</name>
    <name type="common">Burkholderia cepacia (strain R1808)</name>
    <dbReference type="NCBI Taxonomy" id="269482"/>
    <lineage>
        <taxon>Bacteria</taxon>
        <taxon>Pseudomonadati</taxon>
        <taxon>Pseudomonadota</taxon>
        <taxon>Betaproteobacteria</taxon>
        <taxon>Burkholderiales</taxon>
        <taxon>Burkholderiaceae</taxon>
        <taxon>Burkholderia</taxon>
        <taxon>Burkholderia cepacia complex</taxon>
    </lineage>
</organism>
<name>HIS7_BURVG</name>
<dbReference type="EC" id="4.2.1.19" evidence="1"/>
<dbReference type="EMBL" id="CP000614">
    <property type="protein sequence ID" value="ABO53418.1"/>
    <property type="molecule type" value="Genomic_DNA"/>
</dbReference>
<dbReference type="SMR" id="A4JAW5"/>
<dbReference type="KEGG" id="bvi:Bcep1808_0406"/>
<dbReference type="eggNOG" id="COG0131">
    <property type="taxonomic scope" value="Bacteria"/>
</dbReference>
<dbReference type="HOGENOM" id="CLU_044308_2_0_4"/>
<dbReference type="UniPathway" id="UPA00031">
    <property type="reaction ID" value="UER00011"/>
</dbReference>
<dbReference type="Proteomes" id="UP000002287">
    <property type="component" value="Chromosome 1"/>
</dbReference>
<dbReference type="GO" id="GO:0005737">
    <property type="term" value="C:cytoplasm"/>
    <property type="evidence" value="ECO:0007669"/>
    <property type="project" value="UniProtKB-SubCell"/>
</dbReference>
<dbReference type="GO" id="GO:0004424">
    <property type="term" value="F:imidazoleglycerol-phosphate dehydratase activity"/>
    <property type="evidence" value="ECO:0007669"/>
    <property type="project" value="UniProtKB-UniRule"/>
</dbReference>
<dbReference type="GO" id="GO:0000105">
    <property type="term" value="P:L-histidine biosynthetic process"/>
    <property type="evidence" value="ECO:0007669"/>
    <property type="project" value="UniProtKB-UniRule"/>
</dbReference>
<dbReference type="CDD" id="cd07914">
    <property type="entry name" value="IGPD"/>
    <property type="match status" value="1"/>
</dbReference>
<dbReference type="FunFam" id="3.30.230.40:FF:000002">
    <property type="entry name" value="Imidazoleglycerol-phosphate dehydratase"/>
    <property type="match status" value="1"/>
</dbReference>
<dbReference type="FunFam" id="3.30.230.40:FF:000003">
    <property type="entry name" value="Imidazoleglycerol-phosphate dehydratase HisB"/>
    <property type="match status" value="1"/>
</dbReference>
<dbReference type="Gene3D" id="3.30.230.40">
    <property type="entry name" value="Imidazole glycerol phosphate dehydratase, domain 1"/>
    <property type="match status" value="2"/>
</dbReference>
<dbReference type="HAMAP" id="MF_00076">
    <property type="entry name" value="HisB"/>
    <property type="match status" value="1"/>
</dbReference>
<dbReference type="InterPro" id="IPR038494">
    <property type="entry name" value="IGPD_sf"/>
</dbReference>
<dbReference type="InterPro" id="IPR000807">
    <property type="entry name" value="ImidazoleglycerolP_deHydtase"/>
</dbReference>
<dbReference type="InterPro" id="IPR020565">
    <property type="entry name" value="ImidazoleglycerP_deHydtase_CS"/>
</dbReference>
<dbReference type="InterPro" id="IPR020568">
    <property type="entry name" value="Ribosomal_Su5_D2-typ_SF"/>
</dbReference>
<dbReference type="NCBIfam" id="NF002106">
    <property type="entry name" value="PRK00951.1-1"/>
    <property type="match status" value="1"/>
</dbReference>
<dbReference type="NCBIfam" id="NF002109">
    <property type="entry name" value="PRK00951.1-5"/>
    <property type="match status" value="1"/>
</dbReference>
<dbReference type="NCBIfam" id="NF002111">
    <property type="entry name" value="PRK00951.2-1"/>
    <property type="match status" value="1"/>
</dbReference>
<dbReference type="NCBIfam" id="NF002114">
    <property type="entry name" value="PRK00951.2-4"/>
    <property type="match status" value="1"/>
</dbReference>
<dbReference type="PANTHER" id="PTHR23133:SF2">
    <property type="entry name" value="IMIDAZOLEGLYCEROL-PHOSPHATE DEHYDRATASE"/>
    <property type="match status" value="1"/>
</dbReference>
<dbReference type="PANTHER" id="PTHR23133">
    <property type="entry name" value="IMIDAZOLEGLYCEROL-PHOSPHATE DEHYDRATASE HIS7"/>
    <property type="match status" value="1"/>
</dbReference>
<dbReference type="Pfam" id="PF00475">
    <property type="entry name" value="IGPD"/>
    <property type="match status" value="1"/>
</dbReference>
<dbReference type="SUPFAM" id="SSF54211">
    <property type="entry name" value="Ribosomal protein S5 domain 2-like"/>
    <property type="match status" value="2"/>
</dbReference>
<dbReference type="PROSITE" id="PS00954">
    <property type="entry name" value="IGP_DEHYDRATASE_1"/>
    <property type="match status" value="1"/>
</dbReference>
<dbReference type="PROSITE" id="PS00955">
    <property type="entry name" value="IGP_DEHYDRATASE_2"/>
    <property type="match status" value="1"/>
</dbReference>
<evidence type="ECO:0000255" key="1">
    <source>
        <dbReference type="HAMAP-Rule" id="MF_00076"/>
    </source>
</evidence>
<reference key="1">
    <citation type="submission" date="2007-03" db="EMBL/GenBank/DDBJ databases">
        <title>Complete sequence of chromosome 1 of Burkholderia vietnamiensis G4.</title>
        <authorList>
            <consortium name="US DOE Joint Genome Institute"/>
            <person name="Copeland A."/>
            <person name="Lucas S."/>
            <person name="Lapidus A."/>
            <person name="Barry K."/>
            <person name="Detter J.C."/>
            <person name="Glavina del Rio T."/>
            <person name="Hammon N."/>
            <person name="Israni S."/>
            <person name="Dalin E."/>
            <person name="Tice H."/>
            <person name="Pitluck S."/>
            <person name="Chain P."/>
            <person name="Malfatti S."/>
            <person name="Shin M."/>
            <person name="Vergez L."/>
            <person name="Schmutz J."/>
            <person name="Larimer F."/>
            <person name="Land M."/>
            <person name="Hauser L."/>
            <person name="Kyrpides N."/>
            <person name="Tiedje J."/>
            <person name="Richardson P."/>
        </authorList>
    </citation>
    <scope>NUCLEOTIDE SEQUENCE [LARGE SCALE GENOMIC DNA]</scope>
    <source>
        <strain>G4 / LMG 22486</strain>
    </source>
</reference>
<keyword id="KW-0028">Amino-acid biosynthesis</keyword>
<keyword id="KW-0963">Cytoplasm</keyword>
<keyword id="KW-0368">Histidine biosynthesis</keyword>
<keyword id="KW-0456">Lyase</keyword>
<feature type="chain" id="PRO_1000010263" description="Imidazoleglycerol-phosphate dehydratase">
    <location>
        <begin position="1"/>
        <end position="195"/>
    </location>
</feature>
<sequence>MRVAEVVRNTSETQIRVKLDLDGTGRQKLATGVPFLDHMLDQIARHGLIDLEVEAHGDTHIDDHHTVEDVGITLGQAVAKAVGDKKGIRRYGHSYVPLDEALSRVVIDFSGRPGLEFHVPFTRARIGTFDVDLSIEFFRGFVNHAGVTLHIDNLRGINAHHQLETVFKAFGRALRAAVELDERAAGQIPSTKGSL</sequence>
<accession>A4JAW5</accession>
<gene>
    <name evidence="1" type="primary">hisB</name>
    <name type="ordered locus">Bcep1808_0406</name>
</gene>